<protein>
    <recommendedName>
        <fullName evidence="1">Outer-membrane lipoprotein LolB</fullName>
    </recommendedName>
</protein>
<proteinExistence type="inferred from homology"/>
<feature type="signal peptide" evidence="1">
    <location>
        <begin position="1"/>
        <end position="18"/>
    </location>
</feature>
<feature type="chain" id="PRO_0000336593" description="Outer-membrane lipoprotein LolB">
    <location>
        <begin position="19"/>
        <end position="210"/>
    </location>
</feature>
<feature type="lipid moiety-binding region" description="N-palmitoyl cysteine" evidence="1">
    <location>
        <position position="19"/>
    </location>
</feature>
<feature type="lipid moiety-binding region" description="S-diacylglycerol cysteine" evidence="1">
    <location>
        <position position="19"/>
    </location>
</feature>
<accession>A3N0D9</accession>
<dbReference type="EMBL" id="CP000569">
    <property type="protein sequence ID" value="ABN73875.1"/>
    <property type="molecule type" value="Genomic_DNA"/>
</dbReference>
<dbReference type="RefSeq" id="WP_005607704.1">
    <property type="nucleotide sequence ID" value="NC_009053.1"/>
</dbReference>
<dbReference type="SMR" id="A3N0D9"/>
<dbReference type="STRING" id="416269.APL_0777"/>
<dbReference type="EnsemblBacteria" id="ABN73875">
    <property type="protein sequence ID" value="ABN73875"/>
    <property type="gene ID" value="APL_0777"/>
</dbReference>
<dbReference type="KEGG" id="apl:APL_0777"/>
<dbReference type="eggNOG" id="COG3017">
    <property type="taxonomic scope" value="Bacteria"/>
</dbReference>
<dbReference type="HOGENOM" id="CLU_092816_1_1_6"/>
<dbReference type="Proteomes" id="UP000001432">
    <property type="component" value="Chromosome"/>
</dbReference>
<dbReference type="GO" id="GO:0009279">
    <property type="term" value="C:cell outer membrane"/>
    <property type="evidence" value="ECO:0007669"/>
    <property type="project" value="UniProtKB-SubCell"/>
</dbReference>
<dbReference type="GO" id="GO:0044874">
    <property type="term" value="P:lipoprotein localization to outer membrane"/>
    <property type="evidence" value="ECO:0007669"/>
    <property type="project" value="UniProtKB-UniRule"/>
</dbReference>
<dbReference type="GO" id="GO:0015031">
    <property type="term" value="P:protein transport"/>
    <property type="evidence" value="ECO:0007669"/>
    <property type="project" value="UniProtKB-KW"/>
</dbReference>
<dbReference type="CDD" id="cd16326">
    <property type="entry name" value="LolB"/>
    <property type="match status" value="1"/>
</dbReference>
<dbReference type="Gene3D" id="2.50.20.10">
    <property type="entry name" value="Lipoprotein localisation LolA/LolB/LppX"/>
    <property type="match status" value="1"/>
</dbReference>
<dbReference type="HAMAP" id="MF_00233">
    <property type="entry name" value="LolB"/>
    <property type="match status" value="1"/>
</dbReference>
<dbReference type="InterPro" id="IPR029046">
    <property type="entry name" value="LolA/LolB/LppX"/>
</dbReference>
<dbReference type="InterPro" id="IPR004565">
    <property type="entry name" value="OM_lipoprot_LolB"/>
</dbReference>
<dbReference type="NCBIfam" id="TIGR00548">
    <property type="entry name" value="lolB"/>
    <property type="match status" value="1"/>
</dbReference>
<dbReference type="Pfam" id="PF03550">
    <property type="entry name" value="LolB"/>
    <property type="match status" value="1"/>
</dbReference>
<dbReference type="SUPFAM" id="SSF89392">
    <property type="entry name" value="Prokaryotic lipoproteins and lipoprotein localization factors"/>
    <property type="match status" value="1"/>
</dbReference>
<dbReference type="PROSITE" id="PS51257">
    <property type="entry name" value="PROKAR_LIPOPROTEIN"/>
    <property type="match status" value="1"/>
</dbReference>
<reference key="1">
    <citation type="journal article" date="2008" name="J. Bacteriol.">
        <title>The complete genome sequence of Actinobacillus pleuropneumoniae L20 (serotype 5b).</title>
        <authorList>
            <person name="Foote S.J."/>
            <person name="Bosse J.T."/>
            <person name="Bouevitch A.B."/>
            <person name="Langford P.R."/>
            <person name="Young N.M."/>
            <person name="Nash J.H.E."/>
        </authorList>
    </citation>
    <scope>NUCLEOTIDE SEQUENCE [LARGE SCALE GENOMIC DNA]</scope>
    <source>
        <strain>L20</strain>
    </source>
</reference>
<name>LOLB_ACTP2</name>
<keyword id="KW-0998">Cell outer membrane</keyword>
<keyword id="KW-0143">Chaperone</keyword>
<keyword id="KW-0449">Lipoprotein</keyword>
<keyword id="KW-0472">Membrane</keyword>
<keyword id="KW-0564">Palmitate</keyword>
<keyword id="KW-0653">Protein transport</keyword>
<keyword id="KW-1185">Reference proteome</keyword>
<keyword id="KW-0732">Signal</keyword>
<keyword id="KW-0813">Transport</keyword>
<gene>
    <name evidence="1" type="primary">lolB</name>
    <name type="ordered locus">APL_0777</name>
</gene>
<comment type="function">
    <text evidence="1">Plays a critical role in the incorporation of lipoproteins in the outer membrane after they are released by the LolA protein.</text>
</comment>
<comment type="subunit">
    <text evidence="1">Monomer.</text>
</comment>
<comment type="subcellular location">
    <subcellularLocation>
        <location evidence="1">Cell outer membrane</location>
        <topology evidence="1">Lipid-anchor</topology>
    </subcellularLocation>
</comment>
<comment type="similarity">
    <text evidence="1">Belongs to the LolB family.</text>
</comment>
<sequence>MKKFTKILSLSTLLFLAGCQSVLNEPTEVQQPGVQIPHNDAQWQQHLQQLAKIQSYSAKGQIGYISPEERFSSHFDWQYRTPANFGLELSSNLSSKSLKLHRNVRGLTISDSEGNSRSDRDMDSLMKEIIGVAFPIDQFAYWLKGQPEQDGNYIVNDKRQLSQFSYHINGEVWKASYVQYHEDRQPNLPKLIVLENGSQTLKIRVDQWAF</sequence>
<organism>
    <name type="scientific">Actinobacillus pleuropneumoniae serotype 5b (strain L20)</name>
    <dbReference type="NCBI Taxonomy" id="416269"/>
    <lineage>
        <taxon>Bacteria</taxon>
        <taxon>Pseudomonadati</taxon>
        <taxon>Pseudomonadota</taxon>
        <taxon>Gammaproteobacteria</taxon>
        <taxon>Pasteurellales</taxon>
        <taxon>Pasteurellaceae</taxon>
        <taxon>Actinobacillus</taxon>
    </lineage>
</organism>
<evidence type="ECO:0000255" key="1">
    <source>
        <dbReference type="HAMAP-Rule" id="MF_00233"/>
    </source>
</evidence>